<feature type="chain" id="PRO_0000133030" description="Uncharacterized 6.5 kDa protein in P143-LEF5 intergenic region">
    <location>
        <begin position="1"/>
        <end position="56"/>
    </location>
</feature>
<name>Y097_NPVAC</name>
<dbReference type="EMBL" id="L22858">
    <property type="protein sequence ID" value="AAA66727.1"/>
    <property type="molecule type" value="Genomic_DNA"/>
</dbReference>
<dbReference type="EMBL" id="M57687">
    <property type="status" value="NOT_ANNOTATED_CDS"/>
    <property type="molecule type" value="Genomic_DNA"/>
</dbReference>
<dbReference type="PIR" id="B72862">
    <property type="entry name" value="B72862"/>
</dbReference>
<dbReference type="RefSeq" id="NP_054127.1">
    <property type="nucleotide sequence ID" value="NC_001623.1"/>
</dbReference>
<dbReference type="GeneID" id="1403930"/>
<dbReference type="KEGG" id="vg:1403930"/>
<dbReference type="Proteomes" id="UP000008292">
    <property type="component" value="Segment"/>
</dbReference>
<sequence>MATWICWPNNAYIDACTFIVVIILIHLIELNIHLQWVKESLNFAMENGDKEDSDNE</sequence>
<keyword id="KW-1185">Reference proteome</keyword>
<organism>
    <name type="scientific">Autographa californica nuclear polyhedrosis virus</name>
    <name type="common">AcMNPV</name>
    <dbReference type="NCBI Taxonomy" id="46015"/>
    <lineage>
        <taxon>Viruses</taxon>
        <taxon>Viruses incertae sedis</taxon>
        <taxon>Naldaviricetes</taxon>
        <taxon>Lefavirales</taxon>
        <taxon>Baculoviridae</taxon>
        <taxon>Alphabaculovirus</taxon>
        <taxon>Alphabaculovirus aucalifornicae</taxon>
    </lineage>
</organism>
<reference key="1">
    <citation type="journal article" date="1994" name="Virology">
        <title>The complete DNA sequence of Autographa californica nuclear polyhedrosis virus.</title>
        <authorList>
            <person name="Ayres M.D."/>
            <person name="Howard S.C."/>
            <person name="Kuzio J."/>
            <person name="Lopez-Ferber M."/>
            <person name="Possee R.D."/>
        </authorList>
    </citation>
    <scope>NUCLEOTIDE SEQUENCE [LARGE SCALE GENOMIC DNA]</scope>
    <source>
        <strain>C6</strain>
    </source>
</reference>
<reference key="2">
    <citation type="journal article" date="1991" name="Virology">
        <title>Nucleotide sequence of a gene essential for viral DNA replication in the baculovirus Autographa californica nuclear polyhedrosis virus.</title>
        <authorList>
            <person name="Lu A."/>
            <person name="Carstens E.B."/>
        </authorList>
    </citation>
    <scope>NUCLEOTIDE SEQUENCE [GENOMIC DNA]</scope>
    <source>
        <strain>HR3</strain>
    </source>
</reference>
<organismHost>
    <name type="scientific">Lepidoptera</name>
    <name type="common">butterflies and moths</name>
    <dbReference type="NCBI Taxonomy" id="7088"/>
</organismHost>
<accession>P41657</accession>
<proteinExistence type="predicted"/>
<protein>
    <recommendedName>
        <fullName>Uncharacterized 6.5 kDa protein in P143-LEF5 intergenic region</fullName>
    </recommendedName>
</protein>